<accession>A4WUM8</accession>
<name>ATPG_CERS5</name>
<proteinExistence type="inferred from homology"/>
<evidence type="ECO:0000255" key="1">
    <source>
        <dbReference type="HAMAP-Rule" id="MF_00815"/>
    </source>
</evidence>
<dbReference type="EMBL" id="CP000661">
    <property type="protein sequence ID" value="ABP71092.1"/>
    <property type="molecule type" value="Genomic_DNA"/>
</dbReference>
<dbReference type="SMR" id="A4WUM8"/>
<dbReference type="STRING" id="349102.Rsph17025_2202"/>
<dbReference type="KEGG" id="rsq:Rsph17025_2202"/>
<dbReference type="eggNOG" id="COG0224">
    <property type="taxonomic scope" value="Bacteria"/>
</dbReference>
<dbReference type="HOGENOM" id="CLU_050669_0_1_5"/>
<dbReference type="BioCyc" id="RSPH349102:G1G8M-2270-MONOMER"/>
<dbReference type="GO" id="GO:0005886">
    <property type="term" value="C:plasma membrane"/>
    <property type="evidence" value="ECO:0007669"/>
    <property type="project" value="UniProtKB-SubCell"/>
</dbReference>
<dbReference type="GO" id="GO:0045259">
    <property type="term" value="C:proton-transporting ATP synthase complex"/>
    <property type="evidence" value="ECO:0007669"/>
    <property type="project" value="UniProtKB-KW"/>
</dbReference>
<dbReference type="GO" id="GO:0005524">
    <property type="term" value="F:ATP binding"/>
    <property type="evidence" value="ECO:0007669"/>
    <property type="project" value="UniProtKB-UniRule"/>
</dbReference>
<dbReference type="GO" id="GO:0046933">
    <property type="term" value="F:proton-transporting ATP synthase activity, rotational mechanism"/>
    <property type="evidence" value="ECO:0007669"/>
    <property type="project" value="UniProtKB-UniRule"/>
</dbReference>
<dbReference type="GO" id="GO:0042777">
    <property type="term" value="P:proton motive force-driven plasma membrane ATP synthesis"/>
    <property type="evidence" value="ECO:0007669"/>
    <property type="project" value="UniProtKB-UniRule"/>
</dbReference>
<dbReference type="CDD" id="cd12151">
    <property type="entry name" value="F1-ATPase_gamma"/>
    <property type="match status" value="1"/>
</dbReference>
<dbReference type="FunFam" id="1.10.287.80:FF:000001">
    <property type="entry name" value="ATP synthase gamma chain"/>
    <property type="match status" value="1"/>
</dbReference>
<dbReference type="FunFam" id="1.10.287.80:FF:000003">
    <property type="entry name" value="ATP synthase gamma chain, chloroplastic"/>
    <property type="match status" value="1"/>
</dbReference>
<dbReference type="Gene3D" id="3.40.1380.10">
    <property type="match status" value="1"/>
</dbReference>
<dbReference type="Gene3D" id="1.10.287.80">
    <property type="entry name" value="ATP synthase, gamma subunit, helix hairpin domain"/>
    <property type="match status" value="1"/>
</dbReference>
<dbReference type="HAMAP" id="MF_00815">
    <property type="entry name" value="ATP_synth_gamma_bact"/>
    <property type="match status" value="1"/>
</dbReference>
<dbReference type="InterPro" id="IPR035968">
    <property type="entry name" value="ATP_synth_F1_ATPase_gsu"/>
</dbReference>
<dbReference type="InterPro" id="IPR000131">
    <property type="entry name" value="ATP_synth_F1_gsu"/>
</dbReference>
<dbReference type="InterPro" id="IPR023632">
    <property type="entry name" value="ATP_synth_F1_gsu_CS"/>
</dbReference>
<dbReference type="NCBIfam" id="TIGR01146">
    <property type="entry name" value="ATPsyn_F1gamma"/>
    <property type="match status" value="1"/>
</dbReference>
<dbReference type="NCBIfam" id="NF004146">
    <property type="entry name" value="PRK05621.1-4"/>
    <property type="match status" value="1"/>
</dbReference>
<dbReference type="PANTHER" id="PTHR11693">
    <property type="entry name" value="ATP SYNTHASE GAMMA CHAIN"/>
    <property type="match status" value="1"/>
</dbReference>
<dbReference type="PANTHER" id="PTHR11693:SF22">
    <property type="entry name" value="ATP SYNTHASE SUBUNIT GAMMA, MITOCHONDRIAL"/>
    <property type="match status" value="1"/>
</dbReference>
<dbReference type="Pfam" id="PF00231">
    <property type="entry name" value="ATP-synt"/>
    <property type="match status" value="1"/>
</dbReference>
<dbReference type="PIRSF" id="PIRSF039089">
    <property type="entry name" value="ATP_synthase_gamma"/>
    <property type="match status" value="1"/>
</dbReference>
<dbReference type="PRINTS" id="PR00126">
    <property type="entry name" value="ATPASEGAMMA"/>
</dbReference>
<dbReference type="SUPFAM" id="SSF52943">
    <property type="entry name" value="ATP synthase (F1-ATPase), gamma subunit"/>
    <property type="match status" value="1"/>
</dbReference>
<dbReference type="PROSITE" id="PS00153">
    <property type="entry name" value="ATPASE_GAMMA"/>
    <property type="match status" value="1"/>
</dbReference>
<keyword id="KW-0066">ATP synthesis</keyword>
<keyword id="KW-0997">Cell inner membrane</keyword>
<keyword id="KW-1003">Cell membrane</keyword>
<keyword id="KW-0139">CF(1)</keyword>
<keyword id="KW-0375">Hydrogen ion transport</keyword>
<keyword id="KW-0406">Ion transport</keyword>
<keyword id="KW-0472">Membrane</keyword>
<keyword id="KW-0813">Transport</keyword>
<sequence length="289" mass="31204">MPSLKDLKNRIGSVKNTRKITKAMQMVAAAKLRRAQEAAEAARPFAERMTAVMTGLAGSVGSSESAPRLLAGTGSDKVQLLVVMTAERGLCGGFNSSIVRLARAHAAKLLAEGKTVKILTVGKKGREQLRRDLGQHFIGHVDLSEVKRMGYPVAQGIARDVLDRFDKGEFDVATIFFARFQSVISQIPTAQQVIPAVFEGEGEVNSLYDYEPSEEGVLADLLPRGVATQIFTALLENGASEQGARMSAMDNATRNAGDMINRLTIQYNRSRQAAITKELIEIISGAEAL</sequence>
<organism>
    <name type="scientific">Cereibacter sphaeroides (strain ATCC 17025 / ATH 2.4.3)</name>
    <name type="common">Rhodobacter sphaeroides</name>
    <dbReference type="NCBI Taxonomy" id="349102"/>
    <lineage>
        <taxon>Bacteria</taxon>
        <taxon>Pseudomonadati</taxon>
        <taxon>Pseudomonadota</taxon>
        <taxon>Alphaproteobacteria</taxon>
        <taxon>Rhodobacterales</taxon>
        <taxon>Paracoccaceae</taxon>
        <taxon>Cereibacter</taxon>
    </lineage>
</organism>
<protein>
    <recommendedName>
        <fullName evidence="1">ATP synthase gamma chain</fullName>
    </recommendedName>
    <alternativeName>
        <fullName evidence="1">ATP synthase F1 sector gamma subunit</fullName>
    </alternativeName>
    <alternativeName>
        <fullName evidence="1">F-ATPase gamma subunit</fullName>
    </alternativeName>
</protein>
<feature type="chain" id="PRO_1000053311" description="ATP synthase gamma chain">
    <location>
        <begin position="1"/>
        <end position="289"/>
    </location>
</feature>
<gene>
    <name evidence="1" type="primary">atpG</name>
    <name type="ordered locus">Rsph17025_2202</name>
</gene>
<comment type="function">
    <text evidence="1">Produces ATP from ADP in the presence of a proton gradient across the membrane. The gamma chain is believed to be important in regulating ATPase activity and the flow of protons through the CF(0) complex.</text>
</comment>
<comment type="subunit">
    <text evidence="1">F-type ATPases have 2 components, CF(1) - the catalytic core - and CF(0) - the membrane proton channel. CF(1) has five subunits: alpha(3), beta(3), gamma(1), delta(1), epsilon(1). CF(0) has three main subunits: a, b and c.</text>
</comment>
<comment type="subcellular location">
    <subcellularLocation>
        <location evidence="1">Cell inner membrane</location>
        <topology evidence="1">Peripheral membrane protein</topology>
    </subcellularLocation>
</comment>
<comment type="similarity">
    <text evidence="1">Belongs to the ATPase gamma chain family.</text>
</comment>
<reference key="1">
    <citation type="submission" date="2007-04" db="EMBL/GenBank/DDBJ databases">
        <title>Complete sequence of chromosome of Rhodobacter sphaeroides ATCC 17025.</title>
        <authorList>
            <consortium name="US DOE Joint Genome Institute"/>
            <person name="Copeland A."/>
            <person name="Lucas S."/>
            <person name="Lapidus A."/>
            <person name="Barry K."/>
            <person name="Detter J.C."/>
            <person name="Glavina del Rio T."/>
            <person name="Hammon N."/>
            <person name="Israni S."/>
            <person name="Dalin E."/>
            <person name="Tice H."/>
            <person name="Pitluck S."/>
            <person name="Chertkov O."/>
            <person name="Brettin T."/>
            <person name="Bruce D."/>
            <person name="Han C."/>
            <person name="Schmutz J."/>
            <person name="Larimer F."/>
            <person name="Land M."/>
            <person name="Hauser L."/>
            <person name="Kyrpides N."/>
            <person name="Kim E."/>
            <person name="Richardson P."/>
            <person name="Mackenzie C."/>
            <person name="Choudhary M."/>
            <person name="Donohue T.J."/>
            <person name="Kaplan S."/>
        </authorList>
    </citation>
    <scope>NUCLEOTIDE SEQUENCE [LARGE SCALE GENOMIC DNA]</scope>
    <source>
        <strain>ATCC 17025 / ATH 2.4.3</strain>
    </source>
</reference>